<proteinExistence type="inferred from homology"/>
<organism>
    <name type="scientific">Onion yellows phytoplasma (strain OY-M)</name>
    <dbReference type="NCBI Taxonomy" id="262768"/>
    <lineage>
        <taxon>Bacteria</taxon>
        <taxon>Bacillati</taxon>
        <taxon>Mycoplasmatota</taxon>
        <taxon>Mollicutes</taxon>
        <taxon>Acholeplasmatales</taxon>
        <taxon>Acholeplasmataceae</taxon>
        <taxon>Candidatus Phytoplasma</taxon>
        <taxon>16SrI (Aster yellows group)</taxon>
    </lineage>
</organism>
<name>YBEY_ONYPE</name>
<sequence>MIIKIHNQTSFCITPFKSLLIKMFLPIKEKKLMHLIFVTNEKIQELNSFYRQKNYPTDVLSFPNDLTFFAGLEDNSLGDVFISFSKAQVQAQTAKHSLEREIAFLAVHGFLHLKGYQHRTEEEFQIMLALQEKILQNVGLNLDKTT</sequence>
<feature type="chain" id="PRO_0000102500" description="Endoribonuclease YbeY">
    <location>
        <begin position="1"/>
        <end position="146"/>
    </location>
</feature>
<feature type="binding site" evidence="1">
    <location>
        <position position="108"/>
    </location>
    <ligand>
        <name>Zn(2+)</name>
        <dbReference type="ChEBI" id="CHEBI:29105"/>
        <note>catalytic</note>
    </ligand>
</feature>
<feature type="binding site" evidence="1">
    <location>
        <position position="112"/>
    </location>
    <ligand>
        <name>Zn(2+)</name>
        <dbReference type="ChEBI" id="CHEBI:29105"/>
        <note>catalytic</note>
    </ligand>
</feature>
<feature type="binding site" evidence="1">
    <location>
        <position position="118"/>
    </location>
    <ligand>
        <name>Zn(2+)</name>
        <dbReference type="ChEBI" id="CHEBI:29105"/>
        <note>catalytic</note>
    </ligand>
</feature>
<evidence type="ECO:0000255" key="1">
    <source>
        <dbReference type="HAMAP-Rule" id="MF_00009"/>
    </source>
</evidence>
<comment type="function">
    <text evidence="1">Single strand-specific metallo-endoribonuclease involved in late-stage 70S ribosome quality control and in maturation of the 3' terminus of the 16S rRNA.</text>
</comment>
<comment type="cofactor">
    <cofactor evidence="1">
        <name>Zn(2+)</name>
        <dbReference type="ChEBI" id="CHEBI:29105"/>
    </cofactor>
    <text evidence="1">Binds 1 zinc ion.</text>
</comment>
<comment type="subcellular location">
    <subcellularLocation>
        <location evidence="1">Cytoplasm</location>
    </subcellularLocation>
</comment>
<comment type="similarity">
    <text evidence="1">Belongs to the endoribonuclease YbeY family.</text>
</comment>
<gene>
    <name evidence="1" type="primary">ybeY</name>
    <name type="ordered locus">PAM_624</name>
</gene>
<keyword id="KW-0963">Cytoplasm</keyword>
<keyword id="KW-0255">Endonuclease</keyword>
<keyword id="KW-0378">Hydrolase</keyword>
<keyword id="KW-0479">Metal-binding</keyword>
<keyword id="KW-0540">Nuclease</keyword>
<keyword id="KW-0690">Ribosome biogenesis</keyword>
<keyword id="KW-0698">rRNA processing</keyword>
<keyword id="KW-0862">Zinc</keyword>
<dbReference type="EC" id="3.1.-.-" evidence="1"/>
<dbReference type="EMBL" id="AP006628">
    <property type="protein sequence ID" value="BAD04709.1"/>
    <property type="molecule type" value="Genomic_DNA"/>
</dbReference>
<dbReference type="SMR" id="Q6YPV1"/>
<dbReference type="STRING" id="262768.PAM_624"/>
<dbReference type="KEGG" id="poy:PAM_624"/>
<dbReference type="eggNOG" id="COG0319">
    <property type="taxonomic scope" value="Bacteria"/>
</dbReference>
<dbReference type="HOGENOM" id="CLU_106710_3_0_14"/>
<dbReference type="Proteomes" id="UP000002523">
    <property type="component" value="Chromosome"/>
</dbReference>
<dbReference type="GO" id="GO:0005737">
    <property type="term" value="C:cytoplasm"/>
    <property type="evidence" value="ECO:0007669"/>
    <property type="project" value="UniProtKB-SubCell"/>
</dbReference>
<dbReference type="GO" id="GO:0004222">
    <property type="term" value="F:metalloendopeptidase activity"/>
    <property type="evidence" value="ECO:0007669"/>
    <property type="project" value="InterPro"/>
</dbReference>
<dbReference type="GO" id="GO:0004521">
    <property type="term" value="F:RNA endonuclease activity"/>
    <property type="evidence" value="ECO:0007669"/>
    <property type="project" value="UniProtKB-UniRule"/>
</dbReference>
<dbReference type="GO" id="GO:0008270">
    <property type="term" value="F:zinc ion binding"/>
    <property type="evidence" value="ECO:0007669"/>
    <property type="project" value="UniProtKB-UniRule"/>
</dbReference>
<dbReference type="GO" id="GO:0006364">
    <property type="term" value="P:rRNA processing"/>
    <property type="evidence" value="ECO:0007669"/>
    <property type="project" value="UniProtKB-UniRule"/>
</dbReference>
<dbReference type="Gene3D" id="3.40.390.30">
    <property type="entry name" value="Metalloproteases ('zincins'), catalytic domain"/>
    <property type="match status" value="1"/>
</dbReference>
<dbReference type="HAMAP" id="MF_00009">
    <property type="entry name" value="Endoribonucl_YbeY"/>
    <property type="match status" value="1"/>
</dbReference>
<dbReference type="InterPro" id="IPR023091">
    <property type="entry name" value="MetalPrtase_cat_dom_sf_prd"/>
</dbReference>
<dbReference type="InterPro" id="IPR002036">
    <property type="entry name" value="YbeY"/>
</dbReference>
<dbReference type="NCBIfam" id="TIGR00043">
    <property type="entry name" value="rRNA maturation RNase YbeY"/>
    <property type="match status" value="1"/>
</dbReference>
<dbReference type="PANTHER" id="PTHR46986">
    <property type="entry name" value="ENDORIBONUCLEASE YBEY, CHLOROPLASTIC"/>
    <property type="match status" value="1"/>
</dbReference>
<dbReference type="PANTHER" id="PTHR46986:SF1">
    <property type="entry name" value="ENDORIBONUCLEASE YBEY, CHLOROPLASTIC"/>
    <property type="match status" value="1"/>
</dbReference>
<dbReference type="Pfam" id="PF02130">
    <property type="entry name" value="YbeY"/>
    <property type="match status" value="1"/>
</dbReference>
<dbReference type="SUPFAM" id="SSF55486">
    <property type="entry name" value="Metalloproteases ('zincins'), catalytic domain"/>
    <property type="match status" value="1"/>
</dbReference>
<accession>Q6YPV1</accession>
<reference key="1">
    <citation type="journal article" date="2004" name="Nat. Genet.">
        <title>Reductive evolution suggested from the complete genome sequence of a plant-pathogenic phytoplasma.</title>
        <authorList>
            <person name="Oshima K."/>
            <person name="Kakizawa S."/>
            <person name="Nishigawa H."/>
            <person name="Jung H.-Y."/>
            <person name="Wei W."/>
            <person name="Suzuki S."/>
            <person name="Arashida R."/>
            <person name="Nakata D."/>
            <person name="Miyata S."/>
            <person name="Ugaki M."/>
            <person name="Namba S."/>
        </authorList>
    </citation>
    <scope>NUCLEOTIDE SEQUENCE [LARGE SCALE GENOMIC DNA]</scope>
    <source>
        <strain>OY-M</strain>
    </source>
</reference>
<protein>
    <recommendedName>
        <fullName evidence="1">Endoribonuclease YbeY</fullName>
        <ecNumber evidence="1">3.1.-.-</ecNumber>
    </recommendedName>
</protein>